<sequence length="284" mass="30276">MAATILQGKEVAQSIRAELANEVVELKKQGVVPGLTVVIVGDDPASHSYVRGKAKGCEEVGISSEIIRKDADITEEELLVIIQQLNENPNVNGILVQLPLPAHISEHAVIEAIAPEKDVDGFHPISIGNMVLGNDTMLPCTPHGIIELIKRTGTQMAGKHAVVIGRSNIVGKPVSLLLQQENATVTMCHSRTQNLEEYTQKADILVVATGRAHMIGKEHVKPGAVVIDVGVNRIETGKLVGDVKFDEVKDVASFITPVPGGVGPMTITMLLKNTVAAAKKQAKQ</sequence>
<comment type="function">
    <text evidence="1">Catalyzes the oxidation of 5,10-methylenetetrahydrofolate to 5,10-methenyltetrahydrofolate and then the hydrolysis of 5,10-methenyltetrahydrofolate to 10-formyltetrahydrofolate.</text>
</comment>
<comment type="catalytic activity">
    <reaction evidence="1">
        <text>(6R)-5,10-methylene-5,6,7,8-tetrahydrofolate + NADP(+) = (6R)-5,10-methenyltetrahydrofolate + NADPH</text>
        <dbReference type="Rhea" id="RHEA:22812"/>
        <dbReference type="ChEBI" id="CHEBI:15636"/>
        <dbReference type="ChEBI" id="CHEBI:57455"/>
        <dbReference type="ChEBI" id="CHEBI:57783"/>
        <dbReference type="ChEBI" id="CHEBI:58349"/>
        <dbReference type="EC" id="1.5.1.5"/>
    </reaction>
</comment>
<comment type="catalytic activity">
    <reaction evidence="1">
        <text>(6R)-5,10-methenyltetrahydrofolate + H2O = (6R)-10-formyltetrahydrofolate + H(+)</text>
        <dbReference type="Rhea" id="RHEA:23700"/>
        <dbReference type="ChEBI" id="CHEBI:15377"/>
        <dbReference type="ChEBI" id="CHEBI:15378"/>
        <dbReference type="ChEBI" id="CHEBI:57455"/>
        <dbReference type="ChEBI" id="CHEBI:195366"/>
        <dbReference type="EC" id="3.5.4.9"/>
    </reaction>
</comment>
<comment type="pathway">
    <text evidence="1">One-carbon metabolism; tetrahydrofolate interconversion.</text>
</comment>
<comment type="subunit">
    <text evidence="1">Homodimer.</text>
</comment>
<comment type="similarity">
    <text evidence="1">Belongs to the tetrahydrofolate dehydrogenase/cyclohydrolase family.</text>
</comment>
<proteinExistence type="inferred from homology"/>
<organism>
    <name type="scientific">Brevibacillus brevis (strain 47 / JCM 6285 / NBRC 100599)</name>
    <dbReference type="NCBI Taxonomy" id="358681"/>
    <lineage>
        <taxon>Bacteria</taxon>
        <taxon>Bacillati</taxon>
        <taxon>Bacillota</taxon>
        <taxon>Bacilli</taxon>
        <taxon>Bacillales</taxon>
        <taxon>Paenibacillaceae</taxon>
        <taxon>Brevibacillus</taxon>
    </lineage>
</organism>
<reference key="1">
    <citation type="submission" date="2005-03" db="EMBL/GenBank/DDBJ databases">
        <title>Brevibacillus brevis strain 47, complete genome.</title>
        <authorList>
            <person name="Hosoyama A."/>
            <person name="Yamada R."/>
            <person name="Hongo Y."/>
            <person name="Terui Y."/>
            <person name="Ankai A."/>
            <person name="Masuyama W."/>
            <person name="Sekiguchi M."/>
            <person name="Takeda T."/>
            <person name="Asano K."/>
            <person name="Ohji S."/>
            <person name="Ichikawa N."/>
            <person name="Narita S."/>
            <person name="Aoki N."/>
            <person name="Miura H."/>
            <person name="Matsushita S."/>
            <person name="Sekigawa T."/>
            <person name="Yamagata H."/>
            <person name="Yoshikawa H."/>
            <person name="Udaka S."/>
            <person name="Tanikawa S."/>
            <person name="Fujita N."/>
        </authorList>
    </citation>
    <scope>NUCLEOTIDE SEQUENCE [LARGE SCALE GENOMIC DNA]</scope>
    <source>
        <strain>47 / JCM 6285 / NBRC 100599</strain>
    </source>
</reference>
<gene>
    <name evidence="1" type="primary">folD</name>
    <name type="ordered locus">BBR47_23370</name>
</gene>
<accession>C0ZC05</accession>
<evidence type="ECO:0000255" key="1">
    <source>
        <dbReference type="HAMAP-Rule" id="MF_01576"/>
    </source>
</evidence>
<feature type="chain" id="PRO_1000185599" description="Bifunctional protein FolD">
    <location>
        <begin position="1"/>
        <end position="284"/>
    </location>
</feature>
<feature type="binding site" evidence="1">
    <location>
        <begin position="165"/>
        <end position="167"/>
    </location>
    <ligand>
        <name>NADP(+)</name>
        <dbReference type="ChEBI" id="CHEBI:58349"/>
    </ligand>
</feature>
<feature type="binding site" evidence="1">
    <location>
        <position position="190"/>
    </location>
    <ligand>
        <name>NADP(+)</name>
        <dbReference type="ChEBI" id="CHEBI:58349"/>
    </ligand>
</feature>
<feature type="binding site" evidence="1">
    <location>
        <position position="231"/>
    </location>
    <ligand>
        <name>NADP(+)</name>
        <dbReference type="ChEBI" id="CHEBI:58349"/>
    </ligand>
</feature>
<keyword id="KW-0028">Amino-acid biosynthesis</keyword>
<keyword id="KW-0368">Histidine biosynthesis</keyword>
<keyword id="KW-0378">Hydrolase</keyword>
<keyword id="KW-0486">Methionine biosynthesis</keyword>
<keyword id="KW-0511">Multifunctional enzyme</keyword>
<keyword id="KW-0521">NADP</keyword>
<keyword id="KW-0554">One-carbon metabolism</keyword>
<keyword id="KW-0560">Oxidoreductase</keyword>
<keyword id="KW-0658">Purine biosynthesis</keyword>
<keyword id="KW-1185">Reference proteome</keyword>
<dbReference type="EC" id="1.5.1.5" evidence="1"/>
<dbReference type="EC" id="3.5.4.9" evidence="1"/>
<dbReference type="EMBL" id="AP008955">
    <property type="protein sequence ID" value="BAH43314.1"/>
    <property type="molecule type" value="Genomic_DNA"/>
</dbReference>
<dbReference type="RefSeq" id="WP_012686032.1">
    <property type="nucleotide sequence ID" value="NC_012491.1"/>
</dbReference>
<dbReference type="SMR" id="C0ZC05"/>
<dbReference type="STRING" id="358681.BBR47_23370"/>
<dbReference type="KEGG" id="bbe:BBR47_23370"/>
<dbReference type="eggNOG" id="COG0190">
    <property type="taxonomic scope" value="Bacteria"/>
</dbReference>
<dbReference type="HOGENOM" id="CLU_034045_2_1_9"/>
<dbReference type="UniPathway" id="UPA00193"/>
<dbReference type="Proteomes" id="UP000001877">
    <property type="component" value="Chromosome"/>
</dbReference>
<dbReference type="GO" id="GO:0005829">
    <property type="term" value="C:cytosol"/>
    <property type="evidence" value="ECO:0007669"/>
    <property type="project" value="TreeGrafter"/>
</dbReference>
<dbReference type="GO" id="GO:0004477">
    <property type="term" value="F:methenyltetrahydrofolate cyclohydrolase activity"/>
    <property type="evidence" value="ECO:0007669"/>
    <property type="project" value="UniProtKB-UniRule"/>
</dbReference>
<dbReference type="GO" id="GO:0004488">
    <property type="term" value="F:methylenetetrahydrofolate dehydrogenase (NADP+) activity"/>
    <property type="evidence" value="ECO:0007669"/>
    <property type="project" value="UniProtKB-UniRule"/>
</dbReference>
<dbReference type="GO" id="GO:0000105">
    <property type="term" value="P:L-histidine biosynthetic process"/>
    <property type="evidence" value="ECO:0007669"/>
    <property type="project" value="UniProtKB-KW"/>
</dbReference>
<dbReference type="GO" id="GO:0009086">
    <property type="term" value="P:methionine biosynthetic process"/>
    <property type="evidence" value="ECO:0007669"/>
    <property type="project" value="UniProtKB-KW"/>
</dbReference>
<dbReference type="GO" id="GO:0006164">
    <property type="term" value="P:purine nucleotide biosynthetic process"/>
    <property type="evidence" value="ECO:0007669"/>
    <property type="project" value="UniProtKB-KW"/>
</dbReference>
<dbReference type="GO" id="GO:0035999">
    <property type="term" value="P:tetrahydrofolate interconversion"/>
    <property type="evidence" value="ECO:0007669"/>
    <property type="project" value="UniProtKB-UniRule"/>
</dbReference>
<dbReference type="CDD" id="cd01080">
    <property type="entry name" value="NAD_bind_m-THF_DH_Cyclohyd"/>
    <property type="match status" value="1"/>
</dbReference>
<dbReference type="FunFam" id="3.40.50.10860:FF:000001">
    <property type="entry name" value="Bifunctional protein FolD"/>
    <property type="match status" value="1"/>
</dbReference>
<dbReference type="FunFam" id="3.40.50.720:FF:000006">
    <property type="entry name" value="Bifunctional protein FolD"/>
    <property type="match status" value="1"/>
</dbReference>
<dbReference type="Gene3D" id="3.40.50.10860">
    <property type="entry name" value="Leucine Dehydrogenase, chain A, domain 1"/>
    <property type="match status" value="1"/>
</dbReference>
<dbReference type="Gene3D" id="3.40.50.720">
    <property type="entry name" value="NAD(P)-binding Rossmann-like Domain"/>
    <property type="match status" value="1"/>
</dbReference>
<dbReference type="HAMAP" id="MF_01576">
    <property type="entry name" value="THF_DHG_CYH"/>
    <property type="match status" value="1"/>
</dbReference>
<dbReference type="InterPro" id="IPR046346">
    <property type="entry name" value="Aminoacid_DH-like_N_sf"/>
</dbReference>
<dbReference type="InterPro" id="IPR036291">
    <property type="entry name" value="NAD(P)-bd_dom_sf"/>
</dbReference>
<dbReference type="InterPro" id="IPR000672">
    <property type="entry name" value="THF_DH/CycHdrlase"/>
</dbReference>
<dbReference type="InterPro" id="IPR020630">
    <property type="entry name" value="THF_DH/CycHdrlase_cat_dom"/>
</dbReference>
<dbReference type="InterPro" id="IPR020867">
    <property type="entry name" value="THF_DH/CycHdrlase_CS"/>
</dbReference>
<dbReference type="InterPro" id="IPR020631">
    <property type="entry name" value="THF_DH/CycHdrlase_NAD-bd_dom"/>
</dbReference>
<dbReference type="NCBIfam" id="NF008058">
    <property type="entry name" value="PRK10792.1"/>
    <property type="match status" value="1"/>
</dbReference>
<dbReference type="NCBIfam" id="NF010783">
    <property type="entry name" value="PRK14186.1"/>
    <property type="match status" value="1"/>
</dbReference>
<dbReference type="PANTHER" id="PTHR48099:SF5">
    <property type="entry name" value="C-1-TETRAHYDROFOLATE SYNTHASE, CYTOPLASMIC"/>
    <property type="match status" value="1"/>
</dbReference>
<dbReference type="PANTHER" id="PTHR48099">
    <property type="entry name" value="C-1-TETRAHYDROFOLATE SYNTHASE, CYTOPLASMIC-RELATED"/>
    <property type="match status" value="1"/>
</dbReference>
<dbReference type="Pfam" id="PF00763">
    <property type="entry name" value="THF_DHG_CYH"/>
    <property type="match status" value="1"/>
</dbReference>
<dbReference type="Pfam" id="PF02882">
    <property type="entry name" value="THF_DHG_CYH_C"/>
    <property type="match status" value="1"/>
</dbReference>
<dbReference type="PRINTS" id="PR00085">
    <property type="entry name" value="THFDHDRGNASE"/>
</dbReference>
<dbReference type="SUPFAM" id="SSF53223">
    <property type="entry name" value="Aminoacid dehydrogenase-like, N-terminal domain"/>
    <property type="match status" value="1"/>
</dbReference>
<dbReference type="SUPFAM" id="SSF51735">
    <property type="entry name" value="NAD(P)-binding Rossmann-fold domains"/>
    <property type="match status" value="1"/>
</dbReference>
<dbReference type="PROSITE" id="PS00766">
    <property type="entry name" value="THF_DHG_CYH_1"/>
    <property type="match status" value="1"/>
</dbReference>
<dbReference type="PROSITE" id="PS00767">
    <property type="entry name" value="THF_DHG_CYH_2"/>
    <property type="match status" value="1"/>
</dbReference>
<protein>
    <recommendedName>
        <fullName evidence="1">Bifunctional protein FolD</fullName>
    </recommendedName>
    <domain>
        <recommendedName>
            <fullName evidence="1">Methylenetetrahydrofolate dehydrogenase</fullName>
            <ecNumber evidence="1">1.5.1.5</ecNumber>
        </recommendedName>
    </domain>
    <domain>
        <recommendedName>
            <fullName evidence="1">Methenyltetrahydrofolate cyclohydrolase</fullName>
            <ecNumber evidence="1">3.5.4.9</ecNumber>
        </recommendedName>
    </domain>
</protein>
<name>FOLD_BREBN</name>